<reference key="1">
    <citation type="journal article" date="2002" name="Proc. Natl. Acad. Sci. U.S.A.">
        <title>Extensive mosaic structure revealed by the complete genome sequence of uropathogenic Escherichia coli.</title>
        <authorList>
            <person name="Welch R.A."/>
            <person name="Burland V."/>
            <person name="Plunkett G. III"/>
            <person name="Redford P."/>
            <person name="Roesch P."/>
            <person name="Rasko D."/>
            <person name="Buckles E.L."/>
            <person name="Liou S.-R."/>
            <person name="Boutin A."/>
            <person name="Hackett J."/>
            <person name="Stroud D."/>
            <person name="Mayhew G.F."/>
            <person name="Rose D.J."/>
            <person name="Zhou S."/>
            <person name="Schwartz D.C."/>
            <person name="Perna N.T."/>
            <person name="Mobley H.L.T."/>
            <person name="Donnenberg M.S."/>
            <person name="Blattner F.R."/>
        </authorList>
    </citation>
    <scope>NUCLEOTIDE SEQUENCE [LARGE SCALE GENOMIC DNA]</scope>
    <source>
        <strain>CFT073 / ATCC 700928 / UPEC</strain>
    </source>
</reference>
<name>UGPB_ECOL6</name>
<comment type="function">
    <text evidence="1">Part of the ABC transporter complex UgpBAEC involved in sn-glycerol-3-phosphate (G3P) import. Binds G3P.</text>
</comment>
<comment type="subunit">
    <text evidence="1">The complex is composed of two ATP-binding proteins (UgpC), two transmembrane proteins (UgpA and UgpE) and a solute-binding protein (UgpB).</text>
</comment>
<comment type="subcellular location">
    <subcellularLocation>
        <location evidence="1">Periplasm</location>
    </subcellularLocation>
</comment>
<comment type="similarity">
    <text evidence="3">Belongs to the bacterial solute-binding protein 1 family.</text>
</comment>
<gene>
    <name type="primary">ugpB</name>
    <name type="ordered locus">c4242</name>
</gene>
<protein>
    <recommendedName>
        <fullName evidence="1">sn-glycerol-3-phosphate-binding periplasmic protein UgpB</fullName>
    </recommendedName>
</protein>
<proteinExistence type="inferred from homology"/>
<dbReference type="EMBL" id="AE014075">
    <property type="protein sequence ID" value="AAN82678.1"/>
    <property type="molecule type" value="Genomic_DNA"/>
</dbReference>
<dbReference type="RefSeq" id="WP_000803580.1">
    <property type="nucleotide sequence ID" value="NZ_CP051263.1"/>
</dbReference>
<dbReference type="SMR" id="Q8CVL9"/>
<dbReference type="STRING" id="199310.c4242"/>
<dbReference type="KEGG" id="ecc:c4242"/>
<dbReference type="eggNOG" id="COG1653">
    <property type="taxonomic scope" value="Bacteria"/>
</dbReference>
<dbReference type="HOGENOM" id="CLU_031285_3_0_6"/>
<dbReference type="BioCyc" id="ECOL199310:C4242-MONOMER"/>
<dbReference type="Proteomes" id="UP000001410">
    <property type="component" value="Chromosome"/>
</dbReference>
<dbReference type="GO" id="GO:0030288">
    <property type="term" value="C:outer membrane-bounded periplasmic space"/>
    <property type="evidence" value="ECO:0007669"/>
    <property type="project" value="UniProtKB-ARBA"/>
</dbReference>
<dbReference type="GO" id="GO:0055085">
    <property type="term" value="P:transmembrane transport"/>
    <property type="evidence" value="ECO:0007669"/>
    <property type="project" value="InterPro"/>
</dbReference>
<dbReference type="CDD" id="cd14748">
    <property type="entry name" value="PBP2_UgpB"/>
    <property type="match status" value="1"/>
</dbReference>
<dbReference type="Gene3D" id="3.40.190.10">
    <property type="entry name" value="Periplasmic binding protein-like II"/>
    <property type="match status" value="2"/>
</dbReference>
<dbReference type="InterPro" id="IPR050490">
    <property type="entry name" value="Bact_solute-bd_prot1"/>
</dbReference>
<dbReference type="InterPro" id="IPR006059">
    <property type="entry name" value="SBP"/>
</dbReference>
<dbReference type="InterPro" id="IPR006061">
    <property type="entry name" value="SBP_1_CS"/>
</dbReference>
<dbReference type="NCBIfam" id="NF008211">
    <property type="entry name" value="PRK10974.1"/>
    <property type="match status" value="1"/>
</dbReference>
<dbReference type="PANTHER" id="PTHR43649">
    <property type="entry name" value="ARABINOSE-BINDING PROTEIN-RELATED"/>
    <property type="match status" value="1"/>
</dbReference>
<dbReference type="PANTHER" id="PTHR43649:SF31">
    <property type="entry name" value="SN-GLYCEROL-3-PHOSPHATE-BINDING PERIPLASMIC PROTEIN UGPB"/>
    <property type="match status" value="1"/>
</dbReference>
<dbReference type="Pfam" id="PF13416">
    <property type="entry name" value="SBP_bac_8"/>
    <property type="match status" value="1"/>
</dbReference>
<dbReference type="SUPFAM" id="SSF53850">
    <property type="entry name" value="Periplasmic binding protein-like II"/>
    <property type="match status" value="1"/>
</dbReference>
<dbReference type="PROSITE" id="PS01037">
    <property type="entry name" value="SBP_BACTERIAL_1"/>
    <property type="match status" value="1"/>
</dbReference>
<feature type="signal peptide" evidence="2">
    <location>
        <begin position="1"/>
        <end position="23"/>
    </location>
</feature>
<feature type="chain" id="PRO_0000292810" description="sn-glycerol-3-phosphate-binding periplasmic protein UgpB">
    <location>
        <begin position="24"/>
        <end position="438"/>
    </location>
</feature>
<feature type="binding site" evidence="1">
    <location>
        <position position="65"/>
    </location>
    <ligand>
        <name>sn-glycerol 3-phosphate</name>
        <dbReference type="ChEBI" id="CHEBI:57597"/>
    </ligand>
</feature>
<feature type="binding site" evidence="1">
    <location>
        <position position="89"/>
    </location>
    <ligand>
        <name>sn-glycerol 3-phosphate</name>
        <dbReference type="ChEBI" id="CHEBI:57597"/>
    </ligand>
</feature>
<feature type="binding site" evidence="1">
    <location>
        <position position="144"/>
    </location>
    <ligand>
        <name>sn-glycerol 3-phosphate</name>
        <dbReference type="ChEBI" id="CHEBI:57597"/>
    </ligand>
</feature>
<feature type="binding site" evidence="1">
    <location>
        <position position="270"/>
    </location>
    <ligand>
        <name>sn-glycerol 3-phosphate</name>
        <dbReference type="ChEBI" id="CHEBI:57597"/>
    </ligand>
</feature>
<feature type="binding site" evidence="1">
    <location>
        <position position="307"/>
    </location>
    <ligand>
        <name>sn-glycerol 3-phosphate</name>
        <dbReference type="ChEBI" id="CHEBI:57597"/>
    </ligand>
</feature>
<feature type="binding site" evidence="1">
    <location>
        <position position="346"/>
    </location>
    <ligand>
        <name>sn-glycerol 3-phosphate</name>
        <dbReference type="ChEBI" id="CHEBI:57597"/>
    </ligand>
</feature>
<feature type="binding site" evidence="1">
    <location>
        <position position="397"/>
    </location>
    <ligand>
        <name>sn-glycerol 3-phosphate</name>
        <dbReference type="ChEBI" id="CHEBI:57597"/>
    </ligand>
</feature>
<accession>Q8CVL9</accession>
<sequence>MKPLRYTASALALGLALMANAQAVTTIPFWHSMEGELGKEVDSLAQRFNAENPDYKIVPTYKGNYEQNLSAGIAAFRTGNAPAILQVYEVGTATMMASKAIKPVYDVFKEAGIQFDESQFVPTVSGYYSDSKTGHLLSQPFNSSTPVLYYNKDAFKKAGLDPEQPPKTWQDLADYAAKLKASGMKCGYASGWQGWIQLENFSAWNGLPFASKNNGFDGTDAVLEFNKPEQVKHIAMLEEMNKKGDFSYVGRKDESTEKFYNGDCAMTTASSGSLANIREYAKFNYGVGMMPYDADAKDAPQNAIIGGASLWVMQGKDKETYTGVAKFLDFLAKPENAAEWHQKTGYLPITKAAYDLTREQGFYEKNPGADIATRQMLNKPPLPFTKGLRLGNMPQIRVIVDEELESVWTGKKTPQQALDTAVERGNQLLRRFEKSTKS</sequence>
<evidence type="ECO:0000250" key="1">
    <source>
        <dbReference type="UniProtKB" id="P0AG80"/>
    </source>
</evidence>
<evidence type="ECO:0000255" key="2"/>
<evidence type="ECO:0000305" key="3"/>
<keyword id="KW-0574">Periplasm</keyword>
<keyword id="KW-1185">Reference proteome</keyword>
<keyword id="KW-0732">Signal</keyword>
<keyword id="KW-0813">Transport</keyword>
<organism>
    <name type="scientific">Escherichia coli O6:H1 (strain CFT073 / ATCC 700928 / UPEC)</name>
    <dbReference type="NCBI Taxonomy" id="199310"/>
    <lineage>
        <taxon>Bacteria</taxon>
        <taxon>Pseudomonadati</taxon>
        <taxon>Pseudomonadota</taxon>
        <taxon>Gammaproteobacteria</taxon>
        <taxon>Enterobacterales</taxon>
        <taxon>Enterobacteriaceae</taxon>
        <taxon>Escherichia</taxon>
    </lineage>
</organism>